<accession>Q46H47</accession>
<sequence length="115" mass="12977">MAMTLRDIINKLLRRQPASASTARERLQLVLAHDRSDLSTELLDQMRKEILEVVAKYVEIDVDEGAVSLETEDRMTALVANLPIKRTMTGQIQLKEPKNQSEVDSPETEGKDQNS</sequence>
<evidence type="ECO:0000255" key="1">
    <source>
        <dbReference type="HAMAP-Rule" id="MF_00262"/>
    </source>
</evidence>
<evidence type="ECO:0000256" key="2">
    <source>
        <dbReference type="SAM" id="MobiDB-lite"/>
    </source>
</evidence>
<reference key="1">
    <citation type="journal article" date="2007" name="PLoS Genet.">
        <title>Patterns and implications of gene gain and loss in the evolution of Prochlorococcus.</title>
        <authorList>
            <person name="Kettler G.C."/>
            <person name="Martiny A.C."/>
            <person name="Huang K."/>
            <person name="Zucker J."/>
            <person name="Coleman M.L."/>
            <person name="Rodrigue S."/>
            <person name="Chen F."/>
            <person name="Lapidus A."/>
            <person name="Ferriera S."/>
            <person name="Johnson J."/>
            <person name="Steglich C."/>
            <person name="Church G.M."/>
            <person name="Richardson P."/>
            <person name="Chisholm S.W."/>
        </authorList>
    </citation>
    <scope>NUCLEOTIDE SEQUENCE [LARGE SCALE GENOMIC DNA]</scope>
    <source>
        <strain>NATL2A</strain>
    </source>
</reference>
<protein>
    <recommendedName>
        <fullName evidence="1">Cell division topological specificity factor</fullName>
    </recommendedName>
</protein>
<dbReference type="EMBL" id="CP000095">
    <property type="protein sequence ID" value="AAZ59185.1"/>
    <property type="molecule type" value="Genomic_DNA"/>
</dbReference>
<dbReference type="RefSeq" id="WP_011294331.1">
    <property type="nucleotide sequence ID" value="NC_007335.2"/>
</dbReference>
<dbReference type="SMR" id="Q46H47"/>
<dbReference type="STRING" id="59920.PMN2A_1697"/>
<dbReference type="KEGG" id="pmn:PMN2A_1697"/>
<dbReference type="HOGENOM" id="CLU_137929_1_1_3"/>
<dbReference type="PhylomeDB" id="Q46H47"/>
<dbReference type="Proteomes" id="UP000002535">
    <property type="component" value="Chromosome"/>
</dbReference>
<dbReference type="GO" id="GO:0051301">
    <property type="term" value="P:cell division"/>
    <property type="evidence" value="ECO:0007669"/>
    <property type="project" value="UniProtKB-KW"/>
</dbReference>
<dbReference type="GO" id="GO:0032955">
    <property type="term" value="P:regulation of division septum assembly"/>
    <property type="evidence" value="ECO:0007669"/>
    <property type="project" value="InterPro"/>
</dbReference>
<dbReference type="Gene3D" id="3.30.1070.10">
    <property type="entry name" value="Cell division topological specificity factor MinE"/>
    <property type="match status" value="1"/>
</dbReference>
<dbReference type="HAMAP" id="MF_00262">
    <property type="entry name" value="MinE"/>
    <property type="match status" value="1"/>
</dbReference>
<dbReference type="InterPro" id="IPR005527">
    <property type="entry name" value="MinE"/>
</dbReference>
<dbReference type="InterPro" id="IPR036707">
    <property type="entry name" value="MinE_sf"/>
</dbReference>
<dbReference type="NCBIfam" id="TIGR01215">
    <property type="entry name" value="minE"/>
    <property type="match status" value="1"/>
</dbReference>
<dbReference type="NCBIfam" id="NF001422">
    <property type="entry name" value="PRK00296.1"/>
    <property type="match status" value="1"/>
</dbReference>
<dbReference type="Pfam" id="PF03776">
    <property type="entry name" value="MinE"/>
    <property type="match status" value="1"/>
</dbReference>
<dbReference type="SUPFAM" id="SSF55229">
    <property type="entry name" value="Cell division protein MinE topological specificity domain"/>
    <property type="match status" value="1"/>
</dbReference>
<proteinExistence type="inferred from homology"/>
<keyword id="KW-0131">Cell cycle</keyword>
<keyword id="KW-0132">Cell division</keyword>
<keyword id="KW-1185">Reference proteome</keyword>
<organism>
    <name type="scientific">Prochlorococcus marinus (strain NATL2A)</name>
    <dbReference type="NCBI Taxonomy" id="59920"/>
    <lineage>
        <taxon>Bacteria</taxon>
        <taxon>Bacillati</taxon>
        <taxon>Cyanobacteriota</taxon>
        <taxon>Cyanophyceae</taxon>
        <taxon>Synechococcales</taxon>
        <taxon>Prochlorococcaceae</taxon>
        <taxon>Prochlorococcus</taxon>
    </lineage>
</organism>
<comment type="function">
    <text evidence="1">Prevents the cell division inhibition by proteins MinC and MinD at internal division sites while permitting inhibition at polar sites. This ensures cell division at the proper site by restricting the formation of a division septum at the midpoint of the long axis of the cell.</text>
</comment>
<comment type="similarity">
    <text evidence="1">Belongs to the MinE family.</text>
</comment>
<name>MINE_PROMT</name>
<feature type="chain" id="PRO_0000298155" description="Cell division topological specificity factor">
    <location>
        <begin position="1"/>
        <end position="115"/>
    </location>
</feature>
<feature type="region of interest" description="Disordered" evidence="2">
    <location>
        <begin position="89"/>
        <end position="115"/>
    </location>
</feature>
<gene>
    <name evidence="1" type="primary">minE</name>
    <name type="ordered locus">PMN2A_1697</name>
</gene>